<organism>
    <name type="scientific">Bos taurus papillomavirus 4</name>
    <name type="common">Bovine papillomavirus 4</name>
    <dbReference type="NCBI Taxonomy" id="10562"/>
    <lineage>
        <taxon>Viruses</taxon>
        <taxon>Monodnaviria</taxon>
        <taxon>Shotokuvirae</taxon>
        <taxon>Cossaviricota</taxon>
        <taxon>Papovaviricetes</taxon>
        <taxon>Zurhausenvirales</taxon>
        <taxon>Papillomaviridae</taxon>
        <taxon>Firstpapillomavirinae</taxon>
        <taxon>Xipapillomavirus</taxon>
        <taxon>Xipapillomavirus 1</taxon>
    </lineage>
</organism>
<organismHost>
    <name type="scientific">Bos taurus</name>
    <name type="common">Bovine</name>
    <dbReference type="NCBI Taxonomy" id="9913"/>
</organismHost>
<accession>P08346</accession>
<proteinExistence type="predicted"/>
<name>VE3_BPV4</name>
<sequence length="98" mass="11720">MVSLEARFDAVQDQLLQVYENDSNTLELCLQYWALIRRENALYYYARQQGKTRLVCTQCLPPEYQNKRLRMQSRCTYVWKACRNQSLPIKDGHLWTLA</sequence>
<reference key="1">
    <citation type="journal article" date="1987" name="J. Gen. Virol.">
        <title>The nucleotide sequence and genome organization of bovine papillomavirus type 4.</title>
        <authorList>
            <person name="Patel K.R."/>
            <person name="Smith K.T."/>
            <person name="Campo M.S."/>
        </authorList>
    </citation>
    <scope>NUCLEOTIDE SEQUENCE [GENOMIC DNA]</scope>
</reference>
<keyword id="KW-0244">Early protein</keyword>
<dbReference type="EMBL" id="X05817">
    <property type="status" value="NOT_ANNOTATED_CDS"/>
    <property type="molecule type" value="Genomic_DNA"/>
</dbReference>
<dbReference type="PIR" id="E27129">
    <property type="entry name" value="W3WLB4"/>
</dbReference>
<dbReference type="SMR" id="P08346"/>
<dbReference type="Proteomes" id="UP000007613">
    <property type="component" value="Segment"/>
</dbReference>
<dbReference type="GO" id="GO:0006275">
    <property type="term" value="P:regulation of DNA replication"/>
    <property type="evidence" value="ECO:0007669"/>
    <property type="project" value="InterPro"/>
</dbReference>
<dbReference type="GO" id="GO:0006355">
    <property type="term" value="P:regulation of DNA-templated transcription"/>
    <property type="evidence" value="ECO:0007669"/>
    <property type="project" value="InterPro"/>
</dbReference>
<dbReference type="GO" id="GO:0016032">
    <property type="term" value="P:viral process"/>
    <property type="evidence" value="ECO:0007669"/>
    <property type="project" value="InterPro"/>
</dbReference>
<dbReference type="Gene3D" id="1.10.287.30">
    <property type="entry name" value="E2 (early) protein, N terminal domain, subdomain 1"/>
    <property type="match status" value="1"/>
</dbReference>
<dbReference type="InterPro" id="IPR001866">
    <property type="entry name" value="PPV_E2_N"/>
</dbReference>
<dbReference type="InterPro" id="IPR036050">
    <property type="entry name" value="Regulatory_protein_E2_N"/>
</dbReference>
<dbReference type="InterPro" id="IPR042503">
    <property type="entry name" value="Regulatory_protein_E2_N_1"/>
</dbReference>
<dbReference type="Pfam" id="PF00508">
    <property type="entry name" value="PPV_E2_N"/>
    <property type="match status" value="1"/>
</dbReference>
<dbReference type="SUPFAM" id="SSF51332">
    <property type="entry name" value="E2 regulatory, transactivation domain"/>
    <property type="match status" value="1"/>
</dbReference>
<feature type="chain" id="PRO_0000133250" description="Probable protein E3">
    <location>
        <begin position="1"/>
        <end position="98"/>
    </location>
</feature>
<gene>
    <name type="primary">E3</name>
</gene>
<protein>
    <recommendedName>
        <fullName>Probable protein E3</fullName>
    </recommendedName>
</protein>